<feature type="chain" id="PRO_1000139235" description="Protein archease">
    <location>
        <begin position="1"/>
        <end position="147"/>
    </location>
</feature>
<feature type="binding site" evidence="1">
    <location>
        <position position="17"/>
    </location>
    <ligand>
        <name>Ca(2+)</name>
        <dbReference type="ChEBI" id="CHEBI:29108"/>
    </ligand>
</feature>
<feature type="binding site" evidence="1">
    <location>
        <position position="146"/>
    </location>
    <ligand>
        <name>Ca(2+)</name>
        <dbReference type="ChEBI" id="CHEBI:29108"/>
    </ligand>
</feature>
<feature type="binding site" evidence="1">
    <location>
        <position position="147"/>
    </location>
    <ligand>
        <name>Ca(2+)</name>
        <dbReference type="ChEBI" id="CHEBI:29108"/>
    </ligand>
</feature>
<evidence type="ECO:0000250" key="1"/>
<evidence type="ECO:0000255" key="2">
    <source>
        <dbReference type="HAMAP-Rule" id="MF_01222"/>
    </source>
</evidence>
<proteinExistence type="inferred from homology"/>
<name>ARCH_PYRNV</name>
<dbReference type="EMBL" id="CP001014">
    <property type="protein sequence ID" value="ACB39646.1"/>
    <property type="molecule type" value="Genomic_DNA"/>
</dbReference>
<dbReference type="RefSeq" id="WP_012350066.1">
    <property type="nucleotide sequence ID" value="NC_010525.1"/>
</dbReference>
<dbReference type="SMR" id="B1YCY3"/>
<dbReference type="STRING" id="444157.Tneu_0707"/>
<dbReference type="GeneID" id="6165619"/>
<dbReference type="KEGG" id="tne:Tneu_0707"/>
<dbReference type="eggNOG" id="arCOG04055">
    <property type="taxonomic scope" value="Archaea"/>
</dbReference>
<dbReference type="HOGENOM" id="CLU_111362_3_0_2"/>
<dbReference type="OrthoDB" id="8831at2157"/>
<dbReference type="Proteomes" id="UP000001694">
    <property type="component" value="Chromosome"/>
</dbReference>
<dbReference type="GO" id="GO:0005509">
    <property type="term" value="F:calcium ion binding"/>
    <property type="evidence" value="ECO:0007669"/>
    <property type="project" value="UniProtKB-UniRule"/>
</dbReference>
<dbReference type="GO" id="GO:0006388">
    <property type="term" value="P:tRNA splicing, via endonucleolytic cleavage and ligation"/>
    <property type="evidence" value="ECO:0007669"/>
    <property type="project" value="UniProtKB-UniRule"/>
</dbReference>
<dbReference type="Gene3D" id="3.55.10.10">
    <property type="entry name" value="Archease domain"/>
    <property type="match status" value="1"/>
</dbReference>
<dbReference type="HAMAP" id="MF_01222">
    <property type="entry name" value="Archease_arch"/>
    <property type="match status" value="1"/>
</dbReference>
<dbReference type="InterPro" id="IPR002804">
    <property type="entry name" value="Archease"/>
</dbReference>
<dbReference type="InterPro" id="IPR022952">
    <property type="entry name" value="Archease_arc"/>
</dbReference>
<dbReference type="InterPro" id="IPR023572">
    <property type="entry name" value="Archease_dom"/>
</dbReference>
<dbReference type="InterPro" id="IPR036820">
    <property type="entry name" value="Archease_dom_sf"/>
</dbReference>
<dbReference type="NCBIfam" id="NF001617">
    <property type="entry name" value="PRK00407.1"/>
    <property type="match status" value="1"/>
</dbReference>
<dbReference type="PANTHER" id="PTHR12682">
    <property type="entry name" value="ARCHEASE"/>
    <property type="match status" value="1"/>
</dbReference>
<dbReference type="PANTHER" id="PTHR12682:SF11">
    <property type="entry name" value="PROTEIN ARCHEASE"/>
    <property type="match status" value="1"/>
</dbReference>
<dbReference type="Pfam" id="PF01951">
    <property type="entry name" value="Archease"/>
    <property type="match status" value="1"/>
</dbReference>
<dbReference type="SUPFAM" id="SSF69819">
    <property type="entry name" value="MTH1598-like"/>
    <property type="match status" value="1"/>
</dbReference>
<gene>
    <name type="ordered locus">Tneu_0707</name>
</gene>
<protein>
    <recommendedName>
        <fullName evidence="2">Protein archease</fullName>
    </recommendedName>
</protein>
<reference key="1">
    <citation type="submission" date="2008-03" db="EMBL/GenBank/DDBJ databases">
        <title>Complete sequence of Thermoproteus neutrophilus V24Sta.</title>
        <authorList>
            <consortium name="US DOE Joint Genome Institute"/>
            <person name="Copeland A."/>
            <person name="Lucas S."/>
            <person name="Lapidus A."/>
            <person name="Glavina del Rio T."/>
            <person name="Dalin E."/>
            <person name="Tice H."/>
            <person name="Bruce D."/>
            <person name="Goodwin L."/>
            <person name="Pitluck S."/>
            <person name="Sims D."/>
            <person name="Brettin T."/>
            <person name="Detter J.C."/>
            <person name="Han C."/>
            <person name="Kuske C.R."/>
            <person name="Schmutz J."/>
            <person name="Larimer F."/>
            <person name="Land M."/>
            <person name="Hauser L."/>
            <person name="Kyrpides N."/>
            <person name="Mikhailova N."/>
            <person name="Biddle J.F."/>
            <person name="Zhang Z."/>
            <person name="Fitz-Gibbon S.T."/>
            <person name="Lowe T.M."/>
            <person name="Saltikov C."/>
            <person name="House C.H."/>
            <person name="Richardson P."/>
        </authorList>
    </citation>
    <scope>NUCLEOTIDE SEQUENCE [LARGE SCALE GENOMIC DNA]</scope>
    <source>
        <strain>DSM 2338 / JCM 9278 / NBRC 100436 / V24Sta</strain>
    </source>
</reference>
<accession>B1YCY3</accession>
<keyword id="KW-0106">Calcium</keyword>
<keyword id="KW-0479">Metal-binding</keyword>
<keyword id="KW-0819">tRNA processing</keyword>
<sequence>MTCGKPADYRYGEHTADVLIQAYGCTLEEAFVNAAVALAEVTYSTSKVEPKHSREVEVEYDDLEGLLFKWIDELLYLFDAEKFAISRKIDLKLEKDGGYRIKAVLYGDIYSQEKHGFTGLIVKAMTFHMMEIRQIGDYWMVQYVVDI</sequence>
<comment type="function">
    <text evidence="1">Activates the tRNA-splicing ligase complex by facilitating the enzymatic turnover of catalytic subunit RtcB. Acts by promoting the guanylylation of RtcB, a key intermediate step in tRNA ligation. Can also alter the NTP specificity of RtcB such that ATP, dGTP or ITP is used efficiently (By similarity).</text>
</comment>
<comment type="similarity">
    <text evidence="2">Belongs to the archease family.</text>
</comment>
<organism>
    <name type="scientific">Pyrobaculum neutrophilum (strain DSM 2338 / JCM 9278 / NBRC 100436 / V24Sta)</name>
    <name type="common">Thermoproteus neutrophilus</name>
    <dbReference type="NCBI Taxonomy" id="444157"/>
    <lineage>
        <taxon>Archaea</taxon>
        <taxon>Thermoproteota</taxon>
        <taxon>Thermoprotei</taxon>
        <taxon>Thermoproteales</taxon>
        <taxon>Thermoproteaceae</taxon>
        <taxon>Pyrobaculum</taxon>
    </lineage>
</organism>